<feature type="chain" id="PRO_0000331445" description="Sperm-associated antigen 17">
    <location>
        <begin position="1"/>
        <end position="2223"/>
    </location>
</feature>
<feature type="region of interest" description="Disordered" evidence="3">
    <location>
        <begin position="144"/>
        <end position="214"/>
    </location>
</feature>
<feature type="region of interest" description="Disordered" evidence="3">
    <location>
        <begin position="387"/>
        <end position="416"/>
    </location>
</feature>
<feature type="region of interest" description="Disordered" evidence="3">
    <location>
        <begin position="680"/>
        <end position="710"/>
    </location>
</feature>
<feature type="region of interest" description="Disordered" evidence="3">
    <location>
        <begin position="731"/>
        <end position="762"/>
    </location>
</feature>
<feature type="region of interest" description="Disordered" evidence="3">
    <location>
        <begin position="950"/>
        <end position="1015"/>
    </location>
</feature>
<feature type="region of interest" description="Disordered" evidence="3">
    <location>
        <begin position="1179"/>
        <end position="1212"/>
    </location>
</feature>
<feature type="region of interest" description="Disordered" evidence="3">
    <location>
        <begin position="1345"/>
        <end position="1378"/>
    </location>
</feature>
<feature type="region of interest" description="Disordered" evidence="3">
    <location>
        <begin position="1938"/>
        <end position="1957"/>
    </location>
</feature>
<feature type="region of interest" description="Disordered" evidence="3">
    <location>
        <begin position="1962"/>
        <end position="2008"/>
    </location>
</feature>
<feature type="coiled-coil region" evidence="2">
    <location>
        <begin position="266"/>
        <end position="295"/>
    </location>
</feature>
<feature type="coiled-coil region" evidence="2">
    <location>
        <begin position="940"/>
        <end position="966"/>
    </location>
</feature>
<feature type="coiled-coil region" evidence="2">
    <location>
        <begin position="1874"/>
        <end position="1907"/>
    </location>
</feature>
<feature type="compositionally biased region" description="Basic and acidic residues" evidence="3">
    <location>
        <begin position="144"/>
        <end position="172"/>
    </location>
</feature>
<feature type="compositionally biased region" description="Basic and acidic residues" evidence="3">
    <location>
        <begin position="200"/>
        <end position="212"/>
    </location>
</feature>
<feature type="compositionally biased region" description="Basic and acidic residues" evidence="3">
    <location>
        <begin position="743"/>
        <end position="756"/>
    </location>
</feature>
<feature type="compositionally biased region" description="Basic and acidic residues" evidence="3">
    <location>
        <begin position="950"/>
        <end position="999"/>
    </location>
</feature>
<feature type="compositionally biased region" description="Basic and acidic residues" evidence="3">
    <location>
        <begin position="1182"/>
        <end position="1205"/>
    </location>
</feature>
<feature type="compositionally biased region" description="Polar residues" evidence="3">
    <location>
        <begin position="1345"/>
        <end position="1354"/>
    </location>
</feature>
<feature type="compositionally biased region" description="Polar residues" evidence="3">
    <location>
        <begin position="1988"/>
        <end position="1998"/>
    </location>
</feature>
<feature type="sequence variant" id="VAR_042863" description="In dbSNP:rs12133381.">
    <original>R</original>
    <variation>Q</variation>
    <location>
        <position position="143"/>
    </location>
</feature>
<feature type="sequence variant" id="VAR_042864" description="In dbSNP:rs17185492.">
    <original>E</original>
    <variation>V</variation>
    <location>
        <position position="158"/>
    </location>
</feature>
<feature type="sequence variant" id="VAR_042865" description="In dbSNP:rs34366834.">
    <original>T</original>
    <variation>P</variation>
    <location>
        <position position="1253"/>
    </location>
</feature>
<feature type="sequence variant" id="VAR_042866" description="In dbSNP:rs10923472.">
    <original>P</original>
    <variation>L</variation>
    <location>
        <position position="1348"/>
    </location>
</feature>
<feature type="sequence variant" id="VAR_085965" description="In SPGF55; uncertain significance; decreased protein expression in homozygous patient sperm; dbSNP:rs752115449." evidence="6">
    <original>R</original>
    <variation>Q</variation>
    <location>
        <position position="1448"/>
    </location>
</feature>
<feature type="sequence variant" id="VAR_042867" description="In a colorectal cancer sample; somatic mutation." evidence="5">
    <original>D</original>
    <variation>E</variation>
    <location>
        <position position="1707"/>
    </location>
</feature>
<feature type="sequence conflict" description="In Ref. 3; BAC03753." evidence="7" ref="3">
    <original>A</original>
    <variation>S</variation>
    <location>
        <position position="52"/>
    </location>
</feature>
<feature type="sequence conflict" description="In Ref. 3; BAC03753." evidence="7" ref="3">
    <original>I</original>
    <variation>M</variation>
    <location>
        <position position="211"/>
    </location>
</feature>
<feature type="sequence conflict" description="In Ref. 3; BAC03753." evidence="7" ref="3">
    <original>D</original>
    <variation>G</variation>
    <location>
        <position position="675"/>
    </location>
</feature>
<feature type="sequence conflict" description="In Ref. 3; BAC03753." evidence="7" ref="3">
    <original>L</original>
    <variation>P</variation>
    <location>
        <position position="736"/>
    </location>
</feature>
<feature type="sequence conflict" description="In Ref. 3; BAC03753." evidence="7" ref="3">
    <original>N</original>
    <variation>H</variation>
    <location>
        <position position="816"/>
    </location>
</feature>
<dbReference type="EMBL" id="AY555274">
    <property type="protein sequence ID" value="AAS66753.1"/>
    <property type="molecule type" value="mRNA"/>
</dbReference>
<dbReference type="EMBL" id="AL513191">
    <property type="status" value="NOT_ANNOTATED_CDS"/>
    <property type="molecule type" value="Genomic_DNA"/>
</dbReference>
<dbReference type="EMBL" id="AL121993">
    <property type="status" value="NOT_ANNOTATED_CDS"/>
    <property type="molecule type" value="Genomic_DNA"/>
</dbReference>
<dbReference type="EMBL" id="AL139345">
    <property type="status" value="NOT_ANNOTATED_CDS"/>
    <property type="molecule type" value="Genomic_DNA"/>
</dbReference>
<dbReference type="EMBL" id="AK091816">
    <property type="protein sequence ID" value="BAC03753.1"/>
    <property type="molecule type" value="mRNA"/>
</dbReference>
<dbReference type="EMBL" id="AL137581">
    <property type="protein sequence ID" value="CAB70823.1"/>
    <property type="molecule type" value="mRNA"/>
</dbReference>
<dbReference type="CCDS" id="CCDS899.1"/>
<dbReference type="PIR" id="T46291">
    <property type="entry name" value="T46291"/>
</dbReference>
<dbReference type="RefSeq" id="NP_996879.1">
    <property type="nucleotide sequence ID" value="NM_206996.4"/>
</dbReference>
<dbReference type="RefSeq" id="XP_047304678.1">
    <property type="nucleotide sequence ID" value="XM_047448722.1"/>
</dbReference>
<dbReference type="SMR" id="Q6Q759"/>
<dbReference type="BioGRID" id="128304">
    <property type="interactions" value="17"/>
</dbReference>
<dbReference type="FunCoup" id="Q6Q759">
    <property type="interactions" value="97"/>
</dbReference>
<dbReference type="IntAct" id="Q6Q759">
    <property type="interactions" value="3"/>
</dbReference>
<dbReference type="MINT" id="Q6Q759"/>
<dbReference type="STRING" id="9606.ENSP00000337804"/>
<dbReference type="GlyGen" id="Q6Q759">
    <property type="glycosylation" value="3 sites, 2 N-linked glycans (2 sites), 1 O-linked glycan (1 site)"/>
</dbReference>
<dbReference type="iPTMnet" id="Q6Q759"/>
<dbReference type="PhosphoSitePlus" id="Q6Q759"/>
<dbReference type="BioMuta" id="SPAG17"/>
<dbReference type="DMDM" id="74749284"/>
<dbReference type="jPOST" id="Q6Q759"/>
<dbReference type="MassIVE" id="Q6Q759"/>
<dbReference type="PaxDb" id="9606-ENSP00000337804"/>
<dbReference type="PeptideAtlas" id="Q6Q759"/>
<dbReference type="ProteomicsDB" id="67275"/>
<dbReference type="Antibodypedia" id="33897">
    <property type="antibodies" value="31 antibodies from 7 providers"/>
</dbReference>
<dbReference type="DNASU" id="200162"/>
<dbReference type="Ensembl" id="ENST00000336338.10">
    <property type="protein sequence ID" value="ENSP00000337804.5"/>
    <property type="gene ID" value="ENSG00000155761.14"/>
</dbReference>
<dbReference type="GeneID" id="200162"/>
<dbReference type="KEGG" id="hsa:200162"/>
<dbReference type="MANE-Select" id="ENST00000336338.10">
    <property type="protein sequence ID" value="ENSP00000337804.5"/>
    <property type="RefSeq nucleotide sequence ID" value="NM_206996.4"/>
    <property type="RefSeq protein sequence ID" value="NP_996879.1"/>
</dbReference>
<dbReference type="UCSC" id="uc001ehk.3">
    <property type="organism name" value="human"/>
</dbReference>
<dbReference type="AGR" id="HGNC:26620"/>
<dbReference type="CTD" id="200162"/>
<dbReference type="DisGeNET" id="200162"/>
<dbReference type="GeneCards" id="SPAG17"/>
<dbReference type="HGNC" id="HGNC:26620">
    <property type="gene designation" value="SPAG17"/>
</dbReference>
<dbReference type="HPA" id="ENSG00000155761">
    <property type="expression patterns" value="Tissue enhanced (choroid plexus, testis)"/>
</dbReference>
<dbReference type="MalaCards" id="SPAG17"/>
<dbReference type="MIM" id="616554">
    <property type="type" value="gene"/>
</dbReference>
<dbReference type="MIM" id="619380">
    <property type="type" value="phenotype"/>
</dbReference>
<dbReference type="neXtProt" id="NX_Q6Q759"/>
<dbReference type="OpenTargets" id="ENSG00000155761"/>
<dbReference type="Orphanet" id="399805">
    <property type="disease" value="Male infertility with azoospermia or oligozoospermia due to single gene mutation"/>
</dbReference>
<dbReference type="Orphanet" id="276234">
    <property type="disease" value="Non-syndromic male infertility due to sperm motility disorder"/>
</dbReference>
<dbReference type="PharmGKB" id="PA142670888"/>
<dbReference type="VEuPathDB" id="HostDB:ENSG00000155761"/>
<dbReference type="eggNOG" id="ENOG502QSCB">
    <property type="taxonomic scope" value="Eukaryota"/>
</dbReference>
<dbReference type="GeneTree" id="ENSGT00390000013693"/>
<dbReference type="HOGENOM" id="CLU_001433_0_0_1"/>
<dbReference type="InParanoid" id="Q6Q759"/>
<dbReference type="OMA" id="HYATVIT"/>
<dbReference type="OrthoDB" id="10257153at2759"/>
<dbReference type="PAN-GO" id="Q6Q759">
    <property type="GO annotations" value="3 GO annotations based on evolutionary models"/>
</dbReference>
<dbReference type="PhylomeDB" id="Q6Q759"/>
<dbReference type="TreeFam" id="TF328540"/>
<dbReference type="PathwayCommons" id="Q6Q759"/>
<dbReference type="SignaLink" id="Q6Q759"/>
<dbReference type="BioGRID-ORCS" id="200162">
    <property type="hits" value="9 hits in 1155 CRISPR screens"/>
</dbReference>
<dbReference type="ChiTaRS" id="SPAG17">
    <property type="organism name" value="human"/>
</dbReference>
<dbReference type="GenomeRNAi" id="200162"/>
<dbReference type="Pharos" id="Q6Q759">
    <property type="development level" value="Tdark"/>
</dbReference>
<dbReference type="PRO" id="PR:Q6Q759"/>
<dbReference type="Proteomes" id="UP000005640">
    <property type="component" value="Chromosome 1"/>
</dbReference>
<dbReference type="RNAct" id="Q6Q759">
    <property type="molecule type" value="protein"/>
</dbReference>
<dbReference type="Bgee" id="ENSG00000155761">
    <property type="expression patterns" value="Expressed in right uterine tube and 112 other cell types or tissues"/>
</dbReference>
<dbReference type="ExpressionAtlas" id="Q6Q759">
    <property type="expression patterns" value="baseline and differential"/>
</dbReference>
<dbReference type="GO" id="GO:0001669">
    <property type="term" value="C:acrosomal vesicle"/>
    <property type="evidence" value="ECO:0000250"/>
    <property type="project" value="UniProtKB"/>
</dbReference>
<dbReference type="GO" id="GO:1990716">
    <property type="term" value="C:axonemal central apparatus"/>
    <property type="evidence" value="ECO:0000318"/>
    <property type="project" value="GO_Central"/>
</dbReference>
<dbReference type="GO" id="GO:0005576">
    <property type="term" value="C:extracellular region"/>
    <property type="evidence" value="ECO:0007669"/>
    <property type="project" value="GOC"/>
</dbReference>
<dbReference type="GO" id="GO:0005794">
    <property type="term" value="C:Golgi apparatus"/>
    <property type="evidence" value="ECO:0000250"/>
    <property type="project" value="UniProtKB"/>
</dbReference>
<dbReference type="GO" id="GO:0002177">
    <property type="term" value="C:manchette"/>
    <property type="evidence" value="ECO:0000250"/>
    <property type="project" value="UniProtKB"/>
</dbReference>
<dbReference type="GO" id="GO:0005874">
    <property type="term" value="C:microtubule"/>
    <property type="evidence" value="ECO:0007669"/>
    <property type="project" value="UniProtKB-KW"/>
</dbReference>
<dbReference type="GO" id="GO:0031514">
    <property type="term" value="C:motile cilium"/>
    <property type="evidence" value="ECO:0007669"/>
    <property type="project" value="UniProtKB-KW"/>
</dbReference>
<dbReference type="GO" id="GO:1904158">
    <property type="term" value="P:axonemal central apparatus assembly"/>
    <property type="evidence" value="ECO:0000318"/>
    <property type="project" value="GO_Central"/>
</dbReference>
<dbReference type="GO" id="GO:0003351">
    <property type="term" value="P:epithelial cilium movement involved in extracellular fluid movement"/>
    <property type="evidence" value="ECO:0000318"/>
    <property type="project" value="GO_Central"/>
</dbReference>
<dbReference type="GO" id="GO:1990953">
    <property type="term" value="P:intramanchette transport"/>
    <property type="evidence" value="ECO:0000250"/>
    <property type="project" value="UniProtKB"/>
</dbReference>
<dbReference type="GO" id="GO:1905198">
    <property type="term" value="P:manchette assembly"/>
    <property type="evidence" value="ECO:0000250"/>
    <property type="project" value="UniProtKB"/>
</dbReference>
<dbReference type="GO" id="GO:0044458">
    <property type="term" value="P:motile cilium assembly"/>
    <property type="evidence" value="ECO:0000250"/>
    <property type="project" value="UniProtKB"/>
</dbReference>
<dbReference type="GO" id="GO:0007283">
    <property type="term" value="P:spermatogenesis"/>
    <property type="evidence" value="ECO:0000250"/>
    <property type="project" value="UniProtKB"/>
</dbReference>
<dbReference type="InterPro" id="IPR026173">
    <property type="entry name" value="SPAG17"/>
</dbReference>
<dbReference type="PANTHER" id="PTHR21963">
    <property type="entry name" value="PF6"/>
    <property type="match status" value="1"/>
</dbReference>
<dbReference type="PANTHER" id="PTHR21963:SF1">
    <property type="entry name" value="SPERM-ASSOCIATED ANTIGEN 17"/>
    <property type="match status" value="1"/>
</dbReference>
<dbReference type="Pfam" id="PF14874">
    <property type="entry name" value="PapD-like"/>
    <property type="match status" value="1"/>
</dbReference>
<accession>Q6Q759</accession>
<accession>Q8NAZ1</accession>
<accession>Q9NT21</accession>
<protein>
    <recommendedName>
        <fullName>Sperm-associated antigen 17</fullName>
    </recommendedName>
    <alternativeName>
        <fullName>Projection protein PF6 homolog</fullName>
    </alternativeName>
</protein>
<evidence type="ECO:0000250" key="1">
    <source>
        <dbReference type="UniProtKB" id="Q5S003"/>
    </source>
</evidence>
<evidence type="ECO:0000255" key="2"/>
<evidence type="ECO:0000256" key="3">
    <source>
        <dbReference type="SAM" id="MobiDB-lite"/>
    </source>
</evidence>
<evidence type="ECO:0000269" key="4">
    <source>
    </source>
</evidence>
<evidence type="ECO:0000269" key="5">
    <source>
    </source>
</evidence>
<evidence type="ECO:0000269" key="6">
    <source>
    </source>
</evidence>
<evidence type="ECO:0000305" key="7"/>
<comment type="function">
    <text evidence="1">Component of the central pair apparatus of ciliary axonemes. Plays a critical role in the function and structure of motile cilia. May play a role in endochondral bone formation, most likely because of a function in primary cilia of chondrocytes and osteoblasts (By similarity). Essential for normal spermatogenesis and male fertility (By similarity). Required for normal manchette structure, transport of proteins along the manchette microtubules and formation of the sperm head and flagellum (By similarity). Essential for sperm flagellum development and proper assembly of the respiratory motile cilia central pair apparatus, but not the brain ependymal cilia (By similarity).</text>
</comment>
<comment type="subunit">
    <text evidence="1">Interacts (via the C-terminus) with SPAG6; the interaction probably occurs on polymerized microtubules.</text>
</comment>
<comment type="subcellular location">
    <subcellularLocation>
        <location evidence="1">Cytoplasm</location>
    </subcellularLocation>
    <subcellularLocation>
        <location evidence="1">Cytoplasm</location>
        <location evidence="1">Cytoskeleton</location>
        <location evidence="1">Flagellum axoneme</location>
    </subcellularLocation>
    <subcellularLocation>
        <location evidence="1">Cytoplasmic vesicle</location>
        <location evidence="1">Secretory vesicle</location>
        <location evidence="1">Acrosome</location>
    </subcellularLocation>
    <subcellularLocation>
        <location evidence="1">Golgi apparatus</location>
    </subcellularLocation>
    <subcellularLocation>
        <location evidence="1">Cytoplasm</location>
        <location evidence="1">Cytoskeleton</location>
    </subcellularLocation>
    <text evidence="1">Detected in the cytoplasm of round spermatids and in condensing spermatids. Localized to the central pair of the sperm flagellar axoneme. Colocalizes with SPAG6 on microtubules (By similarity). Localizes to the manchette in elongating spermatids (By similarity).</text>
</comment>
<comment type="tissue specificity">
    <text evidence="4">Highly expressed in testis. Expressed in organs that contain cilia-bearing cells including brain, oviduct, lung, and uterus.</text>
</comment>
<comment type="disease" evidence="6">
    <disease id="DI-06145">
        <name>Spermatogenic failure 55</name>
        <acronym>SPGF55</acronym>
        <description>An autosomal recessive male infertility disorder characterized by asthenozoospermia. Semen analysis shows severely reduced sperm motility.</description>
        <dbReference type="MIM" id="619380"/>
    </disease>
    <text>The disease may be caused by variants affecting the gene represented in this entry.</text>
</comment>
<organism>
    <name type="scientific">Homo sapiens</name>
    <name type="common">Human</name>
    <dbReference type="NCBI Taxonomy" id="9606"/>
    <lineage>
        <taxon>Eukaryota</taxon>
        <taxon>Metazoa</taxon>
        <taxon>Chordata</taxon>
        <taxon>Craniata</taxon>
        <taxon>Vertebrata</taxon>
        <taxon>Euteleostomi</taxon>
        <taxon>Mammalia</taxon>
        <taxon>Eutheria</taxon>
        <taxon>Euarchontoglires</taxon>
        <taxon>Primates</taxon>
        <taxon>Haplorrhini</taxon>
        <taxon>Catarrhini</taxon>
        <taxon>Hominidae</taxon>
        <taxon>Homo</taxon>
    </lineage>
</organism>
<name>SPG17_HUMAN</name>
<keyword id="KW-0966">Cell projection</keyword>
<keyword id="KW-0969">Cilium</keyword>
<keyword id="KW-0970">Cilium biogenesis/degradation</keyword>
<keyword id="KW-0175">Coiled coil</keyword>
<keyword id="KW-0963">Cytoplasm</keyword>
<keyword id="KW-0968">Cytoplasmic vesicle</keyword>
<keyword id="KW-0206">Cytoskeleton</keyword>
<keyword id="KW-0221">Differentiation</keyword>
<keyword id="KW-0282">Flagellum</keyword>
<keyword id="KW-0333">Golgi apparatus</keyword>
<keyword id="KW-0493">Microtubule</keyword>
<keyword id="KW-1267">Proteomics identification</keyword>
<keyword id="KW-1185">Reference proteome</keyword>
<keyword id="KW-0744">Spermatogenesis</keyword>
<sequence length="2223" mass="251742">MAPKKEKGGTVNTSSKIWEPSLIAAQFNQNDWQASIAFVVGNQIEDDLLIQALTVAVQVPQRKLFSMVSWQDILQQINEINTLVGSASSKKAKKPVGGNAPLYYEVLTAAKAIMDSGEKLTLPLIGKLLKFQLLQIKFKDQQRRENEKKVIEDKPKLEKDKGKAKSPKEKKAPSAKPAKGKGKDQPEANAPVKKTTQLKRRGEDDHTNRYIDDEPDDGAQHYIIVVGFNNPQLLAIMAELGIPITSVIKISSENYEPLQTHLAAVNQQQEVLLQSEDLEAEKLKKENAIKELKTFWKYLEPVLNNEKPETNLFDVARLEYMVKAADFPSDWSDGEMMLKLGTDIFENIACLMYDILDWKRQHQHYLESMQLINVPQVVNEKPVLEAMPTSEAPQPAVPAPGKKKAQYEEPQAPPPVTSVITTEVDMRYYNYLLNPIREEFISVPLILHCMLEQVVATEEDLVPPSLREPSPRADGLDHRIAAHIVSLLPSLCLSEREKKNLHDIFLSEEENESKAVPKGPLLLNYHDAHAHKKYALQDQKNFDPVQIEQEMQSKLPLWEFLQFPLPPPWNNTKRLATIHELMHFCTSDVLSWNEVERAFKVFTFESLKLSEVDEKGKLKPSGMMCGSDSEMFNIPWDNPARFAKQIRQQYVMKMNTQEAKQKADIKIKDRTLFVDQNLSMSVQDNESNREPSDPSQCDANNMKHSDLNNLKLSVPDNRQLLEQESIMKAQPQHESLEQTTNNEIKDDAVTKADSHEKKPKKMMVEADLEDIKKTQQRSLMDWSFTEHFKPKVLLQVLQEAHKQYRCVDSYYHTQDNSLLLVFHNPMNRQRLHCEYWNIALHSNVGFRNYLELVAKSIQDWITKEEAIYQESKMNEKIIRTRAELELKSSANAKLTSASKIFSIKESKSNKGISKTEISDQEKEKEKEKIPFILEGSLKAWKEEQHRLAEEERLREEKKAEKKGKEAGKKKGKDNAEKEDSRSLKKKSPYKEKSKEEQVKIQEVTEESPHQPEPKITYPFHGYNMGNIPTQISGSNYYLYPSDGGQIEVEKTMFEKGPTFIKVRVVKDNHNFMIHLNDPKEIVKKEEKGDYYLEEEEEGDEEQSLETEVSDAKNKAFSKFGSFSATLENGICLSISYYGSNGMAPEDKDPDLETILNIPSALTPTVVPVIVTVPQSKAKGKIKGKEKPKESLKEEEHPKEEEKKEEEVEPEPVLQETLDVPTFQSLNVSCPSGLLLTFIGQESTGQYVIDEEPTWDIMVRQSYPQRVKHYEFYKTVMPPAEQEASRVITSQGTVVKYMLDGSTQILFADGAVSRSPNSGLICPPSEMPATPHSGDLMDSISQQKSETIPSEITNTKKGKSHKSQSSMAHKGEIHDPPPEAVQTVTPVEVHIGTWFTTTPEGNRIGTKGLERIADLTPLLSFQATDPVNGTVMTTREDKVVIVERKDGTRIVDHADGTRITTFYQVYEDQIILPDDQETTEGPRTVTRQVKCMRVESSRYATVIANCEDSSCCATFGDGTTIIAKPQGTYQVLPPNTGSLYIDKDCSAVYCHESSSNIYYPFQKREQLRAGRYIMRHTSEVICEVLDPEGNTFQVMADGSISTILPEKKLEDDLNEKTEGYDSLSSMHLEKNHQQIYGEHVPRFFVMYADGSGMELLRDSDIEEYLSLAYKESNTVVLQEPVQEQPGTLTITVLRPFHEASPWQVKKEDTIVPPNLRSRSWETFPSVEKKTPGPPFGTQIWKGLCIESKQLVSAPGAILKSPSVLQMRQFIQHEVIKNEVKLRLQVSLKDYINYILKKEDELQEMMVKDSRTEEERGNAADLLKLVMSFPKMEETTKSHVTEVAAHLTDLFKQSLATPPKCPPDTFGKDFFEKTWRHTASSKRWKEKIDKTRKEIETTQNYLMDIKNRIIPPFFKSELNQLYQSQYNHLDSLSKKLPSFTKKNEDANETAVQDTSDLNLDFKPHKVSEQKSSSVPSLPKPEISADKKDFTAQNQTENLTKSPEEAESYEPVKIPTQSLLQDVAGQTRKEKVKLPHYLLSSKPKSQPLAKVQDSVGGKVNTSSVASAAINNAKSSLFGFHLLPSSVKFGVLKEGHTYATVVKLKNVGVDFCRFKVKQPPPSTGLKVTYKPGPVAAGMQTELNIELFATAVGEDGAKGSAHISHNIEIMTEHEVLFLPVEATVLTSSNYDKRPKDFPQGKENPMVQRTSTIYSSTLGVFMSRKVSPH</sequence>
<proteinExistence type="evidence at protein level"/>
<gene>
    <name type="primary">SPAG17</name>
</gene>
<reference key="1">
    <citation type="journal article" date="2005" name="Mol. Cell. Proteomics">
        <title>Dissecting the axoneme interactome: the mammalian orthologue of Chlamydomonas PF6 interacts with sperm-associated antigen 6, the mammalian orthologue of Chlamydomonas PF16.</title>
        <authorList>
            <person name="Zhang Z."/>
            <person name="Jones B.H."/>
            <person name="Tang W."/>
            <person name="Moss S.B."/>
            <person name="Wei Z."/>
            <person name="Ho C."/>
            <person name="Pollack M."/>
            <person name="Horowitz E."/>
            <person name="Bennett J."/>
            <person name="Baker M.E."/>
            <person name="Strauss J.F. III"/>
        </authorList>
    </citation>
    <scope>NUCLEOTIDE SEQUENCE [MRNA]</scope>
    <scope>TISSUE SPECIFICITY</scope>
    <source>
        <tissue>Testis</tissue>
    </source>
</reference>
<reference key="2">
    <citation type="journal article" date="2006" name="Nature">
        <title>The DNA sequence and biological annotation of human chromosome 1.</title>
        <authorList>
            <person name="Gregory S.G."/>
            <person name="Barlow K.F."/>
            <person name="McLay K.E."/>
            <person name="Kaul R."/>
            <person name="Swarbreck D."/>
            <person name="Dunham A."/>
            <person name="Scott C.E."/>
            <person name="Howe K.L."/>
            <person name="Woodfine K."/>
            <person name="Spencer C.C.A."/>
            <person name="Jones M.C."/>
            <person name="Gillson C."/>
            <person name="Searle S."/>
            <person name="Zhou Y."/>
            <person name="Kokocinski F."/>
            <person name="McDonald L."/>
            <person name="Evans R."/>
            <person name="Phillips K."/>
            <person name="Atkinson A."/>
            <person name="Cooper R."/>
            <person name="Jones C."/>
            <person name="Hall R.E."/>
            <person name="Andrews T.D."/>
            <person name="Lloyd C."/>
            <person name="Ainscough R."/>
            <person name="Almeida J.P."/>
            <person name="Ambrose K.D."/>
            <person name="Anderson F."/>
            <person name="Andrew R.W."/>
            <person name="Ashwell R.I.S."/>
            <person name="Aubin K."/>
            <person name="Babbage A.K."/>
            <person name="Bagguley C.L."/>
            <person name="Bailey J."/>
            <person name="Beasley H."/>
            <person name="Bethel G."/>
            <person name="Bird C.P."/>
            <person name="Bray-Allen S."/>
            <person name="Brown J.Y."/>
            <person name="Brown A.J."/>
            <person name="Buckley D."/>
            <person name="Burton J."/>
            <person name="Bye J."/>
            <person name="Carder C."/>
            <person name="Chapman J.C."/>
            <person name="Clark S.Y."/>
            <person name="Clarke G."/>
            <person name="Clee C."/>
            <person name="Cobley V."/>
            <person name="Collier R.E."/>
            <person name="Corby N."/>
            <person name="Coville G.J."/>
            <person name="Davies J."/>
            <person name="Deadman R."/>
            <person name="Dunn M."/>
            <person name="Earthrowl M."/>
            <person name="Ellington A.G."/>
            <person name="Errington H."/>
            <person name="Frankish A."/>
            <person name="Frankland J."/>
            <person name="French L."/>
            <person name="Garner P."/>
            <person name="Garnett J."/>
            <person name="Gay L."/>
            <person name="Ghori M.R.J."/>
            <person name="Gibson R."/>
            <person name="Gilby L.M."/>
            <person name="Gillett W."/>
            <person name="Glithero R.J."/>
            <person name="Grafham D.V."/>
            <person name="Griffiths C."/>
            <person name="Griffiths-Jones S."/>
            <person name="Grocock R."/>
            <person name="Hammond S."/>
            <person name="Harrison E.S.I."/>
            <person name="Hart E."/>
            <person name="Haugen E."/>
            <person name="Heath P.D."/>
            <person name="Holmes S."/>
            <person name="Holt K."/>
            <person name="Howden P.J."/>
            <person name="Hunt A.R."/>
            <person name="Hunt S.E."/>
            <person name="Hunter G."/>
            <person name="Isherwood J."/>
            <person name="James R."/>
            <person name="Johnson C."/>
            <person name="Johnson D."/>
            <person name="Joy A."/>
            <person name="Kay M."/>
            <person name="Kershaw J.K."/>
            <person name="Kibukawa M."/>
            <person name="Kimberley A.M."/>
            <person name="King A."/>
            <person name="Knights A.J."/>
            <person name="Lad H."/>
            <person name="Laird G."/>
            <person name="Lawlor S."/>
            <person name="Leongamornlert D.A."/>
            <person name="Lloyd D.M."/>
            <person name="Loveland J."/>
            <person name="Lovell J."/>
            <person name="Lush M.J."/>
            <person name="Lyne R."/>
            <person name="Martin S."/>
            <person name="Mashreghi-Mohammadi M."/>
            <person name="Matthews L."/>
            <person name="Matthews N.S.W."/>
            <person name="McLaren S."/>
            <person name="Milne S."/>
            <person name="Mistry S."/>
            <person name="Moore M.J.F."/>
            <person name="Nickerson T."/>
            <person name="O'Dell C.N."/>
            <person name="Oliver K."/>
            <person name="Palmeiri A."/>
            <person name="Palmer S.A."/>
            <person name="Parker A."/>
            <person name="Patel D."/>
            <person name="Pearce A.V."/>
            <person name="Peck A.I."/>
            <person name="Pelan S."/>
            <person name="Phelps K."/>
            <person name="Phillimore B.J."/>
            <person name="Plumb R."/>
            <person name="Rajan J."/>
            <person name="Raymond C."/>
            <person name="Rouse G."/>
            <person name="Saenphimmachak C."/>
            <person name="Sehra H.K."/>
            <person name="Sheridan E."/>
            <person name="Shownkeen R."/>
            <person name="Sims S."/>
            <person name="Skuce C.D."/>
            <person name="Smith M."/>
            <person name="Steward C."/>
            <person name="Subramanian S."/>
            <person name="Sycamore N."/>
            <person name="Tracey A."/>
            <person name="Tromans A."/>
            <person name="Van Helmond Z."/>
            <person name="Wall M."/>
            <person name="Wallis J.M."/>
            <person name="White S."/>
            <person name="Whitehead S.L."/>
            <person name="Wilkinson J.E."/>
            <person name="Willey D.L."/>
            <person name="Williams H."/>
            <person name="Wilming L."/>
            <person name="Wray P.W."/>
            <person name="Wu Z."/>
            <person name="Coulson A."/>
            <person name="Vaudin M."/>
            <person name="Sulston J.E."/>
            <person name="Durbin R.M."/>
            <person name="Hubbard T."/>
            <person name="Wooster R."/>
            <person name="Dunham I."/>
            <person name="Carter N.P."/>
            <person name="McVean G."/>
            <person name="Ross M.T."/>
            <person name="Harrow J."/>
            <person name="Olson M.V."/>
            <person name="Beck S."/>
            <person name="Rogers J."/>
            <person name="Bentley D.R."/>
        </authorList>
    </citation>
    <scope>NUCLEOTIDE SEQUENCE [LARGE SCALE GENOMIC DNA]</scope>
</reference>
<reference key="3">
    <citation type="journal article" date="2004" name="Nat. Genet.">
        <title>Complete sequencing and characterization of 21,243 full-length human cDNAs.</title>
        <authorList>
            <person name="Ota T."/>
            <person name="Suzuki Y."/>
            <person name="Nishikawa T."/>
            <person name="Otsuki T."/>
            <person name="Sugiyama T."/>
            <person name="Irie R."/>
            <person name="Wakamatsu A."/>
            <person name="Hayashi K."/>
            <person name="Sato H."/>
            <person name="Nagai K."/>
            <person name="Kimura K."/>
            <person name="Makita H."/>
            <person name="Sekine M."/>
            <person name="Obayashi M."/>
            <person name="Nishi T."/>
            <person name="Shibahara T."/>
            <person name="Tanaka T."/>
            <person name="Ishii S."/>
            <person name="Yamamoto J."/>
            <person name="Saito K."/>
            <person name="Kawai Y."/>
            <person name="Isono Y."/>
            <person name="Nakamura Y."/>
            <person name="Nagahari K."/>
            <person name="Murakami K."/>
            <person name="Yasuda T."/>
            <person name="Iwayanagi T."/>
            <person name="Wagatsuma M."/>
            <person name="Shiratori A."/>
            <person name="Sudo H."/>
            <person name="Hosoiri T."/>
            <person name="Kaku Y."/>
            <person name="Kodaira H."/>
            <person name="Kondo H."/>
            <person name="Sugawara M."/>
            <person name="Takahashi M."/>
            <person name="Kanda K."/>
            <person name="Yokoi T."/>
            <person name="Furuya T."/>
            <person name="Kikkawa E."/>
            <person name="Omura Y."/>
            <person name="Abe K."/>
            <person name="Kamihara K."/>
            <person name="Katsuta N."/>
            <person name="Sato K."/>
            <person name="Tanikawa M."/>
            <person name="Yamazaki M."/>
            <person name="Ninomiya K."/>
            <person name="Ishibashi T."/>
            <person name="Yamashita H."/>
            <person name="Murakawa K."/>
            <person name="Fujimori K."/>
            <person name="Tanai H."/>
            <person name="Kimata M."/>
            <person name="Watanabe M."/>
            <person name="Hiraoka S."/>
            <person name="Chiba Y."/>
            <person name="Ishida S."/>
            <person name="Ono Y."/>
            <person name="Takiguchi S."/>
            <person name="Watanabe S."/>
            <person name="Yosida M."/>
            <person name="Hotuta T."/>
            <person name="Kusano J."/>
            <person name="Kanehori K."/>
            <person name="Takahashi-Fujii A."/>
            <person name="Hara H."/>
            <person name="Tanase T.-O."/>
            <person name="Nomura Y."/>
            <person name="Togiya S."/>
            <person name="Komai F."/>
            <person name="Hara R."/>
            <person name="Takeuchi K."/>
            <person name="Arita M."/>
            <person name="Imose N."/>
            <person name="Musashino K."/>
            <person name="Yuuki H."/>
            <person name="Oshima A."/>
            <person name="Sasaki N."/>
            <person name="Aotsuka S."/>
            <person name="Yoshikawa Y."/>
            <person name="Matsunawa H."/>
            <person name="Ichihara T."/>
            <person name="Shiohata N."/>
            <person name="Sano S."/>
            <person name="Moriya S."/>
            <person name="Momiyama H."/>
            <person name="Satoh N."/>
            <person name="Takami S."/>
            <person name="Terashima Y."/>
            <person name="Suzuki O."/>
            <person name="Nakagawa S."/>
            <person name="Senoh A."/>
            <person name="Mizoguchi H."/>
            <person name="Goto Y."/>
            <person name="Shimizu F."/>
            <person name="Wakebe H."/>
            <person name="Hishigaki H."/>
            <person name="Watanabe T."/>
            <person name="Sugiyama A."/>
            <person name="Takemoto M."/>
            <person name="Kawakami B."/>
            <person name="Yamazaki M."/>
            <person name="Watanabe K."/>
            <person name="Kumagai A."/>
            <person name="Itakura S."/>
            <person name="Fukuzumi Y."/>
            <person name="Fujimori Y."/>
            <person name="Komiyama M."/>
            <person name="Tashiro H."/>
            <person name="Tanigami A."/>
            <person name="Fujiwara T."/>
            <person name="Ono T."/>
            <person name="Yamada K."/>
            <person name="Fujii Y."/>
            <person name="Ozaki K."/>
            <person name="Hirao M."/>
            <person name="Ohmori Y."/>
            <person name="Kawabata A."/>
            <person name="Hikiji T."/>
            <person name="Kobatake N."/>
            <person name="Inagaki H."/>
            <person name="Ikema Y."/>
            <person name="Okamoto S."/>
            <person name="Okitani R."/>
            <person name="Kawakami T."/>
            <person name="Noguchi S."/>
            <person name="Itoh T."/>
            <person name="Shigeta K."/>
            <person name="Senba T."/>
            <person name="Matsumura K."/>
            <person name="Nakajima Y."/>
            <person name="Mizuno T."/>
            <person name="Morinaga M."/>
            <person name="Sasaki M."/>
            <person name="Togashi T."/>
            <person name="Oyama M."/>
            <person name="Hata H."/>
            <person name="Watanabe M."/>
            <person name="Komatsu T."/>
            <person name="Mizushima-Sugano J."/>
            <person name="Satoh T."/>
            <person name="Shirai Y."/>
            <person name="Takahashi Y."/>
            <person name="Nakagawa K."/>
            <person name="Okumura K."/>
            <person name="Nagase T."/>
            <person name="Nomura N."/>
            <person name="Kikuchi H."/>
            <person name="Masuho Y."/>
            <person name="Yamashita R."/>
            <person name="Nakai K."/>
            <person name="Yada T."/>
            <person name="Nakamura Y."/>
            <person name="Ohara O."/>
            <person name="Isogai T."/>
            <person name="Sugano S."/>
        </authorList>
    </citation>
    <scope>NUCLEOTIDE SEQUENCE [LARGE SCALE MRNA] OF 1-922</scope>
    <source>
        <tissue>Lung</tissue>
    </source>
</reference>
<reference key="4">
    <citation type="journal article" date="2007" name="BMC Genomics">
        <title>The full-ORF clone resource of the German cDNA consortium.</title>
        <authorList>
            <person name="Bechtel S."/>
            <person name="Rosenfelder H."/>
            <person name="Duda A."/>
            <person name="Schmidt C.P."/>
            <person name="Ernst U."/>
            <person name="Wellenreuther R."/>
            <person name="Mehrle A."/>
            <person name="Schuster C."/>
            <person name="Bahr A."/>
            <person name="Bloecker H."/>
            <person name="Heubner D."/>
            <person name="Hoerlein A."/>
            <person name="Michel G."/>
            <person name="Wedler H."/>
            <person name="Koehrer K."/>
            <person name="Ottenwaelder B."/>
            <person name="Poustka A."/>
            <person name="Wiemann S."/>
            <person name="Schupp I."/>
        </authorList>
    </citation>
    <scope>NUCLEOTIDE SEQUENCE [LARGE SCALE MRNA] OF 2029-2223</scope>
    <source>
        <tissue>Testis</tissue>
    </source>
</reference>
<reference key="5">
    <citation type="journal article" date="2006" name="Science">
        <title>The consensus coding sequences of human breast and colorectal cancers.</title>
        <authorList>
            <person name="Sjoeblom T."/>
            <person name="Jones S."/>
            <person name="Wood L.D."/>
            <person name="Parsons D.W."/>
            <person name="Lin J."/>
            <person name="Barber T.D."/>
            <person name="Mandelker D."/>
            <person name="Leary R.J."/>
            <person name="Ptak J."/>
            <person name="Silliman N."/>
            <person name="Szabo S."/>
            <person name="Buckhaults P."/>
            <person name="Farrell C."/>
            <person name="Meeh P."/>
            <person name="Markowitz S.D."/>
            <person name="Willis J."/>
            <person name="Dawson D."/>
            <person name="Willson J.K.V."/>
            <person name="Gazdar A.F."/>
            <person name="Hartigan J."/>
            <person name="Wu L."/>
            <person name="Liu C."/>
            <person name="Parmigiani G."/>
            <person name="Park B.H."/>
            <person name="Bachman K.E."/>
            <person name="Papadopoulos N."/>
            <person name="Vogelstein B."/>
            <person name="Kinzler K.W."/>
            <person name="Velculescu V.E."/>
        </authorList>
    </citation>
    <scope>VARIANT [LARGE SCALE ANALYSIS] GLU-1707</scope>
</reference>
<reference key="6">
    <citation type="journal article" date="2018" name="Clin. Genet.">
        <title>A familial study of twins with severe asthenozoospermia identified a homozygous SPAG17 mutation by whole-exome sequencing.</title>
        <authorList>
            <person name="Xu X."/>
            <person name="Sha Y.W."/>
            <person name="Mei L.B."/>
            <person name="Ji Z.Y."/>
            <person name="Qiu P.P."/>
            <person name="Ji H."/>
            <person name="Li P."/>
            <person name="Wang T."/>
            <person name="Li L."/>
        </authorList>
    </citation>
    <scope>VARIANT SPGF55 GLN-1448</scope>
    <scope>INVOLVEMENT IN SPGF55</scope>
    <scope>CHARACTERIZATION OF VARIANT SPGF55 GLN-1448</scope>
</reference>